<sequence>MQLSPQEKDKLLIFTAALVAERRKARGLKLNYPEAVAYISAAILEGAREGRTVADLMNYGTTLLTRDDVMEGVPEMLTEVQVEATFPDGTKLVTVHTPIR</sequence>
<keyword id="KW-0963">Cytoplasm</keyword>
<keyword id="KW-0378">Hydrolase</keyword>
<keyword id="KW-1185">Reference proteome</keyword>
<organism>
    <name type="scientific">Thermosynechococcus vestitus (strain NIES-2133 / IAM M-273 / BP-1)</name>
    <dbReference type="NCBI Taxonomy" id="197221"/>
    <lineage>
        <taxon>Bacteria</taxon>
        <taxon>Bacillati</taxon>
        <taxon>Cyanobacteriota</taxon>
        <taxon>Cyanophyceae</taxon>
        <taxon>Acaryochloridales</taxon>
        <taxon>Thermosynechococcaceae</taxon>
        <taxon>Thermosynechococcus</taxon>
    </lineage>
</organism>
<accession>Q8DK85</accession>
<comment type="catalytic activity">
    <reaction evidence="1">
        <text>urea + 2 H2O + H(+) = hydrogencarbonate + 2 NH4(+)</text>
        <dbReference type="Rhea" id="RHEA:20557"/>
        <dbReference type="ChEBI" id="CHEBI:15377"/>
        <dbReference type="ChEBI" id="CHEBI:15378"/>
        <dbReference type="ChEBI" id="CHEBI:16199"/>
        <dbReference type="ChEBI" id="CHEBI:17544"/>
        <dbReference type="ChEBI" id="CHEBI:28938"/>
        <dbReference type="EC" id="3.5.1.5"/>
    </reaction>
</comment>
<comment type="pathway">
    <text evidence="1">Nitrogen metabolism; urea degradation; CO(2) and NH(3) from urea (urease route): step 1/1.</text>
</comment>
<comment type="subunit">
    <text evidence="1">Heterotrimer of UreA (gamma), UreB (beta) and UreC (alpha) subunits. Three heterotrimers associate to form the active enzyme.</text>
</comment>
<comment type="subcellular location">
    <subcellularLocation>
        <location evidence="1">Cytoplasm</location>
    </subcellularLocation>
</comment>
<comment type="similarity">
    <text evidence="1">Belongs to the urease gamma subunit family.</text>
</comment>
<feature type="chain" id="PRO_0000098052" description="Urease subunit gamma">
    <location>
        <begin position="1"/>
        <end position="100"/>
    </location>
</feature>
<protein>
    <recommendedName>
        <fullName evidence="1">Urease subunit gamma</fullName>
        <ecNumber evidence="1">3.5.1.5</ecNumber>
    </recommendedName>
    <alternativeName>
        <fullName evidence="1">Urea amidohydrolase subunit gamma</fullName>
    </alternativeName>
</protein>
<proteinExistence type="inferred from homology"/>
<dbReference type="EC" id="3.5.1.5" evidence="1"/>
<dbReference type="EMBL" id="BA000039">
    <property type="protein sequence ID" value="BAC08533.1"/>
    <property type="molecule type" value="Genomic_DNA"/>
</dbReference>
<dbReference type="RefSeq" id="NP_681771.1">
    <property type="nucleotide sequence ID" value="NC_004113.1"/>
</dbReference>
<dbReference type="RefSeq" id="WP_011056825.1">
    <property type="nucleotide sequence ID" value="NC_004113.1"/>
</dbReference>
<dbReference type="SMR" id="Q8DK85"/>
<dbReference type="STRING" id="197221.gene:10747573"/>
<dbReference type="EnsemblBacteria" id="BAC08533">
    <property type="protein sequence ID" value="BAC08533"/>
    <property type="gene ID" value="BAC08533"/>
</dbReference>
<dbReference type="KEGG" id="tel:tlr0981"/>
<dbReference type="PATRIC" id="fig|197221.4.peg.1031"/>
<dbReference type="eggNOG" id="COG0831">
    <property type="taxonomic scope" value="Bacteria"/>
</dbReference>
<dbReference type="UniPathway" id="UPA00258">
    <property type="reaction ID" value="UER00370"/>
</dbReference>
<dbReference type="Proteomes" id="UP000000440">
    <property type="component" value="Chromosome"/>
</dbReference>
<dbReference type="GO" id="GO:0005737">
    <property type="term" value="C:cytoplasm"/>
    <property type="evidence" value="ECO:0007669"/>
    <property type="project" value="UniProtKB-SubCell"/>
</dbReference>
<dbReference type="GO" id="GO:0016151">
    <property type="term" value="F:nickel cation binding"/>
    <property type="evidence" value="ECO:0007669"/>
    <property type="project" value="InterPro"/>
</dbReference>
<dbReference type="GO" id="GO:0009039">
    <property type="term" value="F:urease activity"/>
    <property type="evidence" value="ECO:0007669"/>
    <property type="project" value="UniProtKB-UniRule"/>
</dbReference>
<dbReference type="GO" id="GO:0043419">
    <property type="term" value="P:urea catabolic process"/>
    <property type="evidence" value="ECO:0007669"/>
    <property type="project" value="UniProtKB-UniRule"/>
</dbReference>
<dbReference type="CDD" id="cd00390">
    <property type="entry name" value="Urease_gamma"/>
    <property type="match status" value="1"/>
</dbReference>
<dbReference type="Gene3D" id="3.30.280.10">
    <property type="entry name" value="Urease, gamma-like subunit"/>
    <property type="match status" value="1"/>
</dbReference>
<dbReference type="HAMAP" id="MF_00739">
    <property type="entry name" value="Urease_gamma"/>
    <property type="match status" value="1"/>
</dbReference>
<dbReference type="InterPro" id="IPR012010">
    <property type="entry name" value="Urease_gamma"/>
</dbReference>
<dbReference type="InterPro" id="IPR002026">
    <property type="entry name" value="Urease_gamma/gamma-beta_su"/>
</dbReference>
<dbReference type="InterPro" id="IPR036463">
    <property type="entry name" value="Urease_gamma_sf"/>
</dbReference>
<dbReference type="InterPro" id="IPR050069">
    <property type="entry name" value="Urease_subunit"/>
</dbReference>
<dbReference type="NCBIfam" id="NF009712">
    <property type="entry name" value="PRK13241.1"/>
    <property type="match status" value="1"/>
</dbReference>
<dbReference type="NCBIfam" id="TIGR00193">
    <property type="entry name" value="urease_gam"/>
    <property type="match status" value="1"/>
</dbReference>
<dbReference type="PANTHER" id="PTHR33569">
    <property type="entry name" value="UREASE"/>
    <property type="match status" value="1"/>
</dbReference>
<dbReference type="PANTHER" id="PTHR33569:SF1">
    <property type="entry name" value="UREASE"/>
    <property type="match status" value="1"/>
</dbReference>
<dbReference type="Pfam" id="PF00547">
    <property type="entry name" value="Urease_gamma"/>
    <property type="match status" value="1"/>
</dbReference>
<dbReference type="PIRSF" id="PIRSF001223">
    <property type="entry name" value="Urease_gamma"/>
    <property type="match status" value="1"/>
</dbReference>
<dbReference type="SUPFAM" id="SSF54111">
    <property type="entry name" value="Urease, gamma-subunit"/>
    <property type="match status" value="1"/>
</dbReference>
<reference key="1">
    <citation type="journal article" date="2002" name="DNA Res.">
        <title>Complete genome structure of the thermophilic cyanobacterium Thermosynechococcus elongatus BP-1.</title>
        <authorList>
            <person name="Nakamura Y."/>
            <person name="Kaneko T."/>
            <person name="Sato S."/>
            <person name="Ikeuchi M."/>
            <person name="Katoh H."/>
            <person name="Sasamoto S."/>
            <person name="Watanabe A."/>
            <person name="Iriguchi M."/>
            <person name="Kawashima K."/>
            <person name="Kimura T."/>
            <person name="Kishida Y."/>
            <person name="Kiyokawa C."/>
            <person name="Kohara M."/>
            <person name="Matsumoto M."/>
            <person name="Matsuno A."/>
            <person name="Nakazaki N."/>
            <person name="Shimpo S."/>
            <person name="Sugimoto M."/>
            <person name="Takeuchi C."/>
            <person name="Yamada M."/>
            <person name="Tabata S."/>
        </authorList>
    </citation>
    <scope>NUCLEOTIDE SEQUENCE [LARGE SCALE GENOMIC DNA]</scope>
    <source>
        <strain>NIES-2133 / IAM M-273 / BP-1</strain>
    </source>
</reference>
<gene>
    <name evidence="1" type="primary">ureA</name>
    <name type="ordered locus">tlr0981</name>
</gene>
<name>URE3_THEVB</name>
<evidence type="ECO:0000255" key="1">
    <source>
        <dbReference type="HAMAP-Rule" id="MF_00739"/>
    </source>
</evidence>